<evidence type="ECO:0000255" key="1">
    <source>
        <dbReference type="HAMAP-Rule" id="MF_00451"/>
    </source>
</evidence>
<protein>
    <recommendedName>
        <fullName evidence="1">Nucleoside diphosphate kinase</fullName>
        <shortName evidence="1">NDK</shortName>
        <shortName evidence="1">NDP kinase</shortName>
        <ecNumber evidence="1">2.7.4.6</ecNumber>
    </recommendedName>
    <alternativeName>
        <fullName evidence="1">Nucleoside-2-P kinase</fullName>
    </alternativeName>
</protein>
<reference key="1">
    <citation type="journal article" date="2005" name="Genome Res.">
        <title>Complete genome sequence of the hyperthermophilic archaeon Thermococcus kodakaraensis KOD1 and comparison with Pyrococcus genomes.</title>
        <authorList>
            <person name="Fukui T."/>
            <person name="Atomi H."/>
            <person name="Kanai T."/>
            <person name="Matsumi R."/>
            <person name="Fujiwara S."/>
            <person name="Imanaka T."/>
        </authorList>
    </citation>
    <scope>NUCLEOTIDE SEQUENCE [LARGE SCALE GENOMIC DNA]</scope>
    <source>
        <strain>ATCC BAA-918 / JCM 12380 / KOD1</strain>
    </source>
</reference>
<dbReference type="EC" id="2.7.4.6" evidence="1"/>
<dbReference type="EMBL" id="AP006878">
    <property type="protein sequence ID" value="BAD85496.1"/>
    <property type="molecule type" value="Genomic_DNA"/>
</dbReference>
<dbReference type="RefSeq" id="WP_011250258.1">
    <property type="nucleotide sequence ID" value="NC_006624.1"/>
</dbReference>
<dbReference type="SMR" id="Q5JGR7"/>
<dbReference type="FunCoup" id="Q5JGR7">
    <property type="interactions" value="207"/>
</dbReference>
<dbReference type="STRING" id="69014.TK1307"/>
<dbReference type="EnsemblBacteria" id="BAD85496">
    <property type="protein sequence ID" value="BAD85496"/>
    <property type="gene ID" value="TK1307"/>
</dbReference>
<dbReference type="GeneID" id="78447827"/>
<dbReference type="KEGG" id="tko:TK1307"/>
<dbReference type="PATRIC" id="fig|69014.16.peg.1279"/>
<dbReference type="eggNOG" id="arCOG04313">
    <property type="taxonomic scope" value="Archaea"/>
</dbReference>
<dbReference type="HOGENOM" id="CLU_060216_6_3_2"/>
<dbReference type="InParanoid" id="Q5JGR7"/>
<dbReference type="OrthoDB" id="6874at2157"/>
<dbReference type="PhylomeDB" id="Q5JGR7"/>
<dbReference type="Proteomes" id="UP000000536">
    <property type="component" value="Chromosome"/>
</dbReference>
<dbReference type="GO" id="GO:0005737">
    <property type="term" value="C:cytoplasm"/>
    <property type="evidence" value="ECO:0007669"/>
    <property type="project" value="UniProtKB-SubCell"/>
</dbReference>
<dbReference type="GO" id="GO:0005524">
    <property type="term" value="F:ATP binding"/>
    <property type="evidence" value="ECO:0007669"/>
    <property type="project" value="UniProtKB-UniRule"/>
</dbReference>
<dbReference type="GO" id="GO:0046872">
    <property type="term" value="F:metal ion binding"/>
    <property type="evidence" value="ECO:0007669"/>
    <property type="project" value="UniProtKB-KW"/>
</dbReference>
<dbReference type="GO" id="GO:0004550">
    <property type="term" value="F:nucleoside diphosphate kinase activity"/>
    <property type="evidence" value="ECO:0007669"/>
    <property type="project" value="UniProtKB-UniRule"/>
</dbReference>
<dbReference type="GO" id="GO:0006241">
    <property type="term" value="P:CTP biosynthetic process"/>
    <property type="evidence" value="ECO:0007669"/>
    <property type="project" value="UniProtKB-UniRule"/>
</dbReference>
<dbReference type="GO" id="GO:0006183">
    <property type="term" value="P:GTP biosynthetic process"/>
    <property type="evidence" value="ECO:0007669"/>
    <property type="project" value="UniProtKB-UniRule"/>
</dbReference>
<dbReference type="GO" id="GO:0006228">
    <property type="term" value="P:UTP biosynthetic process"/>
    <property type="evidence" value="ECO:0007669"/>
    <property type="project" value="UniProtKB-UniRule"/>
</dbReference>
<dbReference type="CDD" id="cd04413">
    <property type="entry name" value="NDPk_I"/>
    <property type="match status" value="1"/>
</dbReference>
<dbReference type="FunFam" id="3.30.70.141:FF:000003">
    <property type="entry name" value="Nucleoside diphosphate kinase"/>
    <property type="match status" value="1"/>
</dbReference>
<dbReference type="Gene3D" id="3.30.70.141">
    <property type="entry name" value="Nucleoside diphosphate kinase-like domain"/>
    <property type="match status" value="1"/>
</dbReference>
<dbReference type="HAMAP" id="MF_00451">
    <property type="entry name" value="NDP_kinase"/>
    <property type="match status" value="1"/>
</dbReference>
<dbReference type="InterPro" id="IPR034907">
    <property type="entry name" value="NDK-like_dom"/>
</dbReference>
<dbReference type="InterPro" id="IPR036850">
    <property type="entry name" value="NDK-like_dom_sf"/>
</dbReference>
<dbReference type="InterPro" id="IPR001564">
    <property type="entry name" value="Nucleoside_diP_kinase"/>
</dbReference>
<dbReference type="InterPro" id="IPR023005">
    <property type="entry name" value="Nucleoside_diP_kinase_AS"/>
</dbReference>
<dbReference type="NCBIfam" id="NF001908">
    <property type="entry name" value="PRK00668.1"/>
    <property type="match status" value="1"/>
</dbReference>
<dbReference type="PANTHER" id="PTHR11349">
    <property type="entry name" value="NUCLEOSIDE DIPHOSPHATE KINASE"/>
    <property type="match status" value="1"/>
</dbReference>
<dbReference type="Pfam" id="PF00334">
    <property type="entry name" value="NDK"/>
    <property type="match status" value="1"/>
</dbReference>
<dbReference type="PRINTS" id="PR01243">
    <property type="entry name" value="NUCDPKINASE"/>
</dbReference>
<dbReference type="SMART" id="SM00562">
    <property type="entry name" value="NDK"/>
    <property type="match status" value="1"/>
</dbReference>
<dbReference type="SUPFAM" id="SSF54919">
    <property type="entry name" value="Nucleoside diphosphate kinase, NDK"/>
    <property type="match status" value="1"/>
</dbReference>
<dbReference type="PROSITE" id="PS00469">
    <property type="entry name" value="NDPK"/>
    <property type="match status" value="1"/>
</dbReference>
<dbReference type="PROSITE" id="PS51374">
    <property type="entry name" value="NDPK_LIKE"/>
    <property type="match status" value="1"/>
</dbReference>
<gene>
    <name evidence="1" type="primary">ndk</name>
    <name type="ordered locus">TK1307</name>
</gene>
<feature type="chain" id="PRO_0000137100" description="Nucleoside diphosphate kinase">
    <location>
        <begin position="1"/>
        <end position="174"/>
    </location>
</feature>
<feature type="active site" description="Pros-phosphohistidine intermediate" evidence="1">
    <location>
        <position position="123"/>
    </location>
</feature>
<feature type="binding site" evidence="1">
    <location>
        <position position="14"/>
    </location>
    <ligand>
        <name>ATP</name>
        <dbReference type="ChEBI" id="CHEBI:30616"/>
    </ligand>
</feature>
<feature type="binding site" evidence="1">
    <location>
        <position position="62"/>
    </location>
    <ligand>
        <name>ATP</name>
        <dbReference type="ChEBI" id="CHEBI:30616"/>
    </ligand>
</feature>
<feature type="binding site" evidence="1">
    <location>
        <position position="90"/>
    </location>
    <ligand>
        <name>ATP</name>
        <dbReference type="ChEBI" id="CHEBI:30616"/>
    </ligand>
</feature>
<feature type="binding site" evidence="1">
    <location>
        <position position="96"/>
    </location>
    <ligand>
        <name>ATP</name>
        <dbReference type="ChEBI" id="CHEBI:30616"/>
    </ligand>
</feature>
<feature type="binding site" evidence="1">
    <location>
        <position position="107"/>
    </location>
    <ligand>
        <name>ATP</name>
        <dbReference type="ChEBI" id="CHEBI:30616"/>
    </ligand>
</feature>
<sequence>MADKQIERTLIILKPDAVVRGLMGEIISRFEKRGLKIVGMKMIWIDRKLAEKHYAEHKGKPFFEPLIDYITKAPSVVMVVEGRYAISVVRKMAGATDPKDAEPGSIRGDYGLDVGDAIYNVIHASDSPESAEREINLYFKPEELFEYCKAADWFYHTHARSKKEYLDSMDCLER</sequence>
<accession>Q5JGR7</accession>
<proteinExistence type="inferred from homology"/>
<keyword id="KW-0067">ATP-binding</keyword>
<keyword id="KW-0963">Cytoplasm</keyword>
<keyword id="KW-0418">Kinase</keyword>
<keyword id="KW-0460">Magnesium</keyword>
<keyword id="KW-0479">Metal-binding</keyword>
<keyword id="KW-0546">Nucleotide metabolism</keyword>
<keyword id="KW-0547">Nucleotide-binding</keyword>
<keyword id="KW-0597">Phosphoprotein</keyword>
<keyword id="KW-1185">Reference proteome</keyword>
<keyword id="KW-0808">Transferase</keyword>
<comment type="function">
    <text evidence="1">Major role in the synthesis of nucleoside triphosphates other than ATP. The ATP gamma phosphate is transferred to the NDP beta phosphate via a ping-pong mechanism, using a phosphorylated active-site intermediate.</text>
</comment>
<comment type="catalytic activity">
    <reaction evidence="1">
        <text>a 2'-deoxyribonucleoside 5'-diphosphate + ATP = a 2'-deoxyribonucleoside 5'-triphosphate + ADP</text>
        <dbReference type="Rhea" id="RHEA:44640"/>
        <dbReference type="ChEBI" id="CHEBI:30616"/>
        <dbReference type="ChEBI" id="CHEBI:61560"/>
        <dbReference type="ChEBI" id="CHEBI:73316"/>
        <dbReference type="ChEBI" id="CHEBI:456216"/>
        <dbReference type="EC" id="2.7.4.6"/>
    </reaction>
</comment>
<comment type="catalytic activity">
    <reaction evidence="1">
        <text>a ribonucleoside 5'-diphosphate + ATP = a ribonucleoside 5'-triphosphate + ADP</text>
        <dbReference type="Rhea" id="RHEA:18113"/>
        <dbReference type="ChEBI" id="CHEBI:30616"/>
        <dbReference type="ChEBI" id="CHEBI:57930"/>
        <dbReference type="ChEBI" id="CHEBI:61557"/>
        <dbReference type="ChEBI" id="CHEBI:456216"/>
        <dbReference type="EC" id="2.7.4.6"/>
    </reaction>
</comment>
<comment type="cofactor">
    <cofactor evidence="1">
        <name>Mg(2+)</name>
        <dbReference type="ChEBI" id="CHEBI:18420"/>
    </cofactor>
</comment>
<comment type="subcellular location">
    <subcellularLocation>
        <location evidence="1">Cytoplasm</location>
    </subcellularLocation>
</comment>
<comment type="similarity">
    <text evidence="1">Belongs to the NDK family.</text>
</comment>
<organism>
    <name type="scientific">Thermococcus kodakarensis (strain ATCC BAA-918 / JCM 12380 / KOD1)</name>
    <name type="common">Pyrococcus kodakaraensis (strain KOD1)</name>
    <dbReference type="NCBI Taxonomy" id="69014"/>
    <lineage>
        <taxon>Archaea</taxon>
        <taxon>Methanobacteriati</taxon>
        <taxon>Methanobacteriota</taxon>
        <taxon>Thermococci</taxon>
        <taxon>Thermococcales</taxon>
        <taxon>Thermococcaceae</taxon>
        <taxon>Thermococcus</taxon>
    </lineage>
</organism>
<name>NDK_THEKO</name>